<evidence type="ECO:0000255" key="1">
    <source>
        <dbReference type="HAMAP-Rule" id="MF_00366"/>
    </source>
</evidence>
<gene>
    <name evidence="1" type="primary">rpoZ</name>
    <name type="ordered locus">BCQ_3655</name>
</gene>
<protein>
    <recommendedName>
        <fullName evidence="1">DNA-directed RNA polymerase subunit omega</fullName>
        <shortName evidence="1">RNAP omega subunit</shortName>
        <ecNumber evidence="1">2.7.7.6</ecNumber>
    </recommendedName>
    <alternativeName>
        <fullName evidence="1">RNA polymerase omega subunit</fullName>
    </alternativeName>
    <alternativeName>
        <fullName evidence="1">Transcriptase subunit omega</fullName>
    </alternativeName>
</protein>
<comment type="function">
    <text evidence="1">Promotes RNA polymerase assembly. Latches the N- and C-terminal regions of the beta' subunit thereby facilitating its interaction with the beta and alpha subunits.</text>
</comment>
<comment type="catalytic activity">
    <reaction evidence="1">
        <text>RNA(n) + a ribonucleoside 5'-triphosphate = RNA(n+1) + diphosphate</text>
        <dbReference type="Rhea" id="RHEA:21248"/>
        <dbReference type="Rhea" id="RHEA-COMP:14527"/>
        <dbReference type="Rhea" id="RHEA-COMP:17342"/>
        <dbReference type="ChEBI" id="CHEBI:33019"/>
        <dbReference type="ChEBI" id="CHEBI:61557"/>
        <dbReference type="ChEBI" id="CHEBI:140395"/>
        <dbReference type="EC" id="2.7.7.6"/>
    </reaction>
</comment>
<comment type="subunit">
    <text evidence="1">The RNAP catalytic core consists of 2 alpha, 1 beta, 1 beta' and 1 omega subunit. When a sigma factor is associated with the core the holoenzyme is formed, which can initiate transcription.</text>
</comment>
<comment type="similarity">
    <text evidence="1">Belongs to the RNA polymerase subunit omega family.</text>
</comment>
<keyword id="KW-0240">DNA-directed RNA polymerase</keyword>
<keyword id="KW-0548">Nucleotidyltransferase</keyword>
<keyword id="KW-0804">Transcription</keyword>
<keyword id="KW-0808">Transferase</keyword>
<reference key="1">
    <citation type="journal article" date="2009" name="J. Bacteriol.">
        <title>Complete genome sequence of the extremophilic Bacillus cereus strain Q1 with industrial applications.</title>
        <authorList>
            <person name="Xiong Z."/>
            <person name="Jiang Y."/>
            <person name="Qi D."/>
            <person name="Lu H."/>
            <person name="Yang F."/>
            <person name="Yang J."/>
            <person name="Chen L."/>
            <person name="Sun L."/>
            <person name="Xu X."/>
            <person name="Xue Y."/>
            <person name="Zhu Y."/>
            <person name="Jin Q."/>
        </authorList>
    </citation>
    <scope>NUCLEOTIDE SEQUENCE [LARGE SCALE GENOMIC DNA]</scope>
    <source>
        <strain>Q1</strain>
    </source>
</reference>
<feature type="chain" id="PRO_1000133718" description="DNA-directed RNA polymerase subunit omega">
    <location>
        <begin position="1"/>
        <end position="70"/>
    </location>
</feature>
<accession>B9IVU6</accession>
<proteinExistence type="inferred from homology"/>
<organism>
    <name type="scientific">Bacillus cereus (strain Q1)</name>
    <dbReference type="NCBI Taxonomy" id="361100"/>
    <lineage>
        <taxon>Bacteria</taxon>
        <taxon>Bacillati</taxon>
        <taxon>Bacillota</taxon>
        <taxon>Bacilli</taxon>
        <taxon>Bacillales</taxon>
        <taxon>Bacillaceae</taxon>
        <taxon>Bacillus</taxon>
        <taxon>Bacillus cereus group</taxon>
    </lineage>
</organism>
<dbReference type="EC" id="2.7.7.6" evidence="1"/>
<dbReference type="EMBL" id="CP000227">
    <property type="protein sequence ID" value="ACM14083.1"/>
    <property type="molecule type" value="Genomic_DNA"/>
</dbReference>
<dbReference type="SMR" id="B9IVU6"/>
<dbReference type="KEGG" id="bcq:BCQ_3655"/>
<dbReference type="HOGENOM" id="CLU_125406_6_0_9"/>
<dbReference type="Proteomes" id="UP000000441">
    <property type="component" value="Chromosome"/>
</dbReference>
<dbReference type="GO" id="GO:0000428">
    <property type="term" value="C:DNA-directed RNA polymerase complex"/>
    <property type="evidence" value="ECO:0007669"/>
    <property type="project" value="UniProtKB-KW"/>
</dbReference>
<dbReference type="GO" id="GO:0003677">
    <property type="term" value="F:DNA binding"/>
    <property type="evidence" value="ECO:0007669"/>
    <property type="project" value="UniProtKB-UniRule"/>
</dbReference>
<dbReference type="GO" id="GO:0003899">
    <property type="term" value="F:DNA-directed RNA polymerase activity"/>
    <property type="evidence" value="ECO:0007669"/>
    <property type="project" value="UniProtKB-UniRule"/>
</dbReference>
<dbReference type="GO" id="GO:0006351">
    <property type="term" value="P:DNA-templated transcription"/>
    <property type="evidence" value="ECO:0007669"/>
    <property type="project" value="UniProtKB-UniRule"/>
</dbReference>
<dbReference type="Gene3D" id="3.90.940.10">
    <property type="match status" value="1"/>
</dbReference>
<dbReference type="HAMAP" id="MF_00366">
    <property type="entry name" value="RNApol_bact_RpoZ"/>
    <property type="match status" value="1"/>
</dbReference>
<dbReference type="InterPro" id="IPR003716">
    <property type="entry name" value="DNA-dir_RNA_pol_omega"/>
</dbReference>
<dbReference type="InterPro" id="IPR006110">
    <property type="entry name" value="Pol_omega/Rpo6/RPB6"/>
</dbReference>
<dbReference type="InterPro" id="IPR036161">
    <property type="entry name" value="RPB6/omega-like_sf"/>
</dbReference>
<dbReference type="NCBIfam" id="TIGR00690">
    <property type="entry name" value="rpoZ"/>
    <property type="match status" value="1"/>
</dbReference>
<dbReference type="PANTHER" id="PTHR34476">
    <property type="entry name" value="DNA-DIRECTED RNA POLYMERASE SUBUNIT OMEGA"/>
    <property type="match status" value="1"/>
</dbReference>
<dbReference type="PANTHER" id="PTHR34476:SF1">
    <property type="entry name" value="DNA-DIRECTED RNA POLYMERASE SUBUNIT OMEGA"/>
    <property type="match status" value="1"/>
</dbReference>
<dbReference type="Pfam" id="PF01192">
    <property type="entry name" value="RNA_pol_Rpb6"/>
    <property type="match status" value="1"/>
</dbReference>
<dbReference type="SMART" id="SM01409">
    <property type="entry name" value="RNA_pol_Rpb6"/>
    <property type="match status" value="1"/>
</dbReference>
<dbReference type="SUPFAM" id="SSF63562">
    <property type="entry name" value="RPB6/omega subunit-like"/>
    <property type="match status" value="1"/>
</dbReference>
<name>RPOZ_BACCQ</name>
<sequence>MLNPSIDSLLTKIDSKYTLVTVAAKRAREMQLANNCVVEKPVSHKCVGKALEEIDMEALSYVPSEDKVTE</sequence>